<dbReference type="EMBL" id="CP000946">
    <property type="protein sequence ID" value="ACA78766.1"/>
    <property type="molecule type" value="Genomic_DNA"/>
</dbReference>
<dbReference type="RefSeq" id="WP_000678201.1">
    <property type="nucleotide sequence ID" value="NZ_MTFT01000020.1"/>
</dbReference>
<dbReference type="SMR" id="B1IZC1"/>
<dbReference type="GeneID" id="93776977"/>
<dbReference type="KEGG" id="ecl:EcolC_3143"/>
<dbReference type="HOGENOM" id="CLU_006684_3_0_6"/>
<dbReference type="GO" id="GO:0005737">
    <property type="term" value="C:cytoplasm"/>
    <property type="evidence" value="ECO:0007669"/>
    <property type="project" value="UniProtKB-SubCell"/>
</dbReference>
<dbReference type="GO" id="GO:0005524">
    <property type="term" value="F:ATP binding"/>
    <property type="evidence" value="ECO:0007669"/>
    <property type="project" value="UniProtKB-UniRule"/>
</dbReference>
<dbReference type="GO" id="GO:0016887">
    <property type="term" value="F:ATP hydrolysis activity"/>
    <property type="evidence" value="ECO:0007669"/>
    <property type="project" value="InterPro"/>
</dbReference>
<dbReference type="GO" id="GO:0140662">
    <property type="term" value="F:ATP-dependent protein folding chaperone"/>
    <property type="evidence" value="ECO:0007669"/>
    <property type="project" value="InterPro"/>
</dbReference>
<dbReference type="GO" id="GO:0051082">
    <property type="term" value="F:unfolded protein binding"/>
    <property type="evidence" value="ECO:0007669"/>
    <property type="project" value="UniProtKB-UniRule"/>
</dbReference>
<dbReference type="CDD" id="cd16927">
    <property type="entry name" value="HATPase_Hsp90-like"/>
    <property type="match status" value="1"/>
</dbReference>
<dbReference type="FunFam" id="1.20.120.790:FF:000002">
    <property type="entry name" value="Molecular chaperone HtpG"/>
    <property type="match status" value="1"/>
</dbReference>
<dbReference type="FunFam" id="3.30.230.80:FF:000002">
    <property type="entry name" value="Molecular chaperone HtpG"/>
    <property type="match status" value="1"/>
</dbReference>
<dbReference type="FunFam" id="3.30.565.10:FF:000009">
    <property type="entry name" value="Molecular chaperone HtpG"/>
    <property type="match status" value="1"/>
</dbReference>
<dbReference type="FunFam" id="3.40.50.11260:FF:000002">
    <property type="entry name" value="Molecular chaperone HtpG"/>
    <property type="match status" value="1"/>
</dbReference>
<dbReference type="Gene3D" id="3.30.230.80">
    <property type="match status" value="1"/>
</dbReference>
<dbReference type="Gene3D" id="3.40.50.11260">
    <property type="match status" value="1"/>
</dbReference>
<dbReference type="Gene3D" id="1.20.120.790">
    <property type="entry name" value="Heat shock protein 90, C-terminal domain"/>
    <property type="match status" value="1"/>
</dbReference>
<dbReference type="Gene3D" id="3.30.565.10">
    <property type="entry name" value="Histidine kinase-like ATPase, C-terminal domain"/>
    <property type="match status" value="1"/>
</dbReference>
<dbReference type="HAMAP" id="MF_00505">
    <property type="entry name" value="HSP90"/>
    <property type="match status" value="1"/>
</dbReference>
<dbReference type="InterPro" id="IPR036890">
    <property type="entry name" value="HATPase_C_sf"/>
</dbReference>
<dbReference type="InterPro" id="IPR019805">
    <property type="entry name" value="Heat_shock_protein_90_CS"/>
</dbReference>
<dbReference type="InterPro" id="IPR037196">
    <property type="entry name" value="HSP90_C"/>
</dbReference>
<dbReference type="InterPro" id="IPR001404">
    <property type="entry name" value="Hsp90_fam"/>
</dbReference>
<dbReference type="InterPro" id="IPR020575">
    <property type="entry name" value="Hsp90_N"/>
</dbReference>
<dbReference type="InterPro" id="IPR020568">
    <property type="entry name" value="Ribosomal_Su5_D2-typ_SF"/>
</dbReference>
<dbReference type="NCBIfam" id="NF003555">
    <property type="entry name" value="PRK05218.1"/>
    <property type="match status" value="1"/>
</dbReference>
<dbReference type="PANTHER" id="PTHR11528">
    <property type="entry name" value="HEAT SHOCK PROTEIN 90 FAMILY MEMBER"/>
    <property type="match status" value="1"/>
</dbReference>
<dbReference type="Pfam" id="PF13589">
    <property type="entry name" value="HATPase_c_3"/>
    <property type="match status" value="1"/>
</dbReference>
<dbReference type="Pfam" id="PF00183">
    <property type="entry name" value="HSP90"/>
    <property type="match status" value="1"/>
</dbReference>
<dbReference type="PIRSF" id="PIRSF002583">
    <property type="entry name" value="Hsp90"/>
    <property type="match status" value="1"/>
</dbReference>
<dbReference type="PRINTS" id="PR00775">
    <property type="entry name" value="HEATSHOCK90"/>
</dbReference>
<dbReference type="SMART" id="SM00387">
    <property type="entry name" value="HATPase_c"/>
    <property type="match status" value="1"/>
</dbReference>
<dbReference type="SUPFAM" id="SSF55874">
    <property type="entry name" value="ATPase domain of HSP90 chaperone/DNA topoisomerase II/histidine kinase"/>
    <property type="match status" value="1"/>
</dbReference>
<dbReference type="SUPFAM" id="SSF110942">
    <property type="entry name" value="HSP90 C-terminal domain"/>
    <property type="match status" value="1"/>
</dbReference>
<dbReference type="SUPFAM" id="SSF54211">
    <property type="entry name" value="Ribosomal protein S5 domain 2-like"/>
    <property type="match status" value="1"/>
</dbReference>
<dbReference type="PROSITE" id="PS00298">
    <property type="entry name" value="HSP90"/>
    <property type="match status" value="1"/>
</dbReference>
<organism>
    <name type="scientific">Escherichia coli (strain ATCC 8739 / DSM 1576 / NBRC 3972 / NCIMB 8545 / WDCM 00012 / Crooks)</name>
    <dbReference type="NCBI Taxonomy" id="481805"/>
    <lineage>
        <taxon>Bacteria</taxon>
        <taxon>Pseudomonadati</taxon>
        <taxon>Pseudomonadota</taxon>
        <taxon>Gammaproteobacteria</taxon>
        <taxon>Enterobacterales</taxon>
        <taxon>Enterobacteriaceae</taxon>
        <taxon>Escherichia</taxon>
    </lineage>
</organism>
<sequence>MKGQETRGFQSEVKQLLHLMIHSLYSNKEIFLRELISNASDAADKLRFRALSNPDLYEGDGELRVRVSFDKDKRTLTISDNGVGMTRDEVIDHLGTIAKSGTKSFLESLGSDQAKDSQLIGQFGVGFYSAFIVADKVTVRTRAAGEKPENGVFWESAGEGEYTVADITKEDRGTEITLHLREGEDEFLDDWRVRSIISKYSDHIALPVEIEKREEKDGETVISWEKINKAQALWTRNKSEITDEEYKEFYKHIAHDFNDPLTWSHNRVEGKQEYTSLLYIPSQAPWDMWNRDHKHGLKLYVQRVFIMDDAEQFMPNYLRFVRGLIDSSDLPLNVSREILQDSTVTRNLRNALTKRVLQMLEKLAKDDAEKYQTFWQQFGLVLKEGPAEDFANQEAIAKLLRFASTHTDSSAQTVSLEDYVSRMKEGQEKIYYITADSYAAAKSSPHLELLRKKGIEVLLLSDRIDEWMMNYLTEFDGKPFQSVSKVDESLEKLADEVDESAKEAEKALTPFIDRVKALLGERVKDVRLTHRLTDTPAIVSTDADEMSTQMAKLFAAAGQKVPEVKYIFELNPDHVLVKRAADTEDEAKFSEWVELLLDQALLAERGTLEDPNLFIRRMNQLLVS</sequence>
<comment type="function">
    <text evidence="1">Molecular chaperone. Has ATPase activity.</text>
</comment>
<comment type="subunit">
    <text evidence="1">Homodimer.</text>
</comment>
<comment type="subcellular location">
    <subcellularLocation>
        <location evidence="1">Cytoplasm</location>
    </subcellularLocation>
</comment>
<comment type="similarity">
    <text evidence="1">Belongs to the heat shock protein 90 family.</text>
</comment>
<name>HTPG_ECOLC</name>
<reference key="1">
    <citation type="submission" date="2008-02" db="EMBL/GenBank/DDBJ databases">
        <title>Complete sequence of Escherichia coli C str. ATCC 8739.</title>
        <authorList>
            <person name="Copeland A."/>
            <person name="Lucas S."/>
            <person name="Lapidus A."/>
            <person name="Glavina del Rio T."/>
            <person name="Dalin E."/>
            <person name="Tice H."/>
            <person name="Bruce D."/>
            <person name="Goodwin L."/>
            <person name="Pitluck S."/>
            <person name="Kiss H."/>
            <person name="Brettin T."/>
            <person name="Detter J.C."/>
            <person name="Han C."/>
            <person name="Kuske C.R."/>
            <person name="Schmutz J."/>
            <person name="Larimer F."/>
            <person name="Land M."/>
            <person name="Hauser L."/>
            <person name="Kyrpides N."/>
            <person name="Mikhailova N."/>
            <person name="Ingram L."/>
            <person name="Richardson P."/>
        </authorList>
    </citation>
    <scope>NUCLEOTIDE SEQUENCE [LARGE SCALE GENOMIC DNA]</scope>
    <source>
        <strain>ATCC 8739 / DSM 1576 / NBRC 3972 / NCIMB 8545 / WDCM 00012 / Crooks</strain>
    </source>
</reference>
<protein>
    <recommendedName>
        <fullName evidence="1">Chaperone protein HtpG</fullName>
    </recommendedName>
    <alternativeName>
        <fullName evidence="1">Heat shock protein HtpG</fullName>
    </alternativeName>
    <alternativeName>
        <fullName evidence="1">High temperature protein G</fullName>
    </alternativeName>
</protein>
<accession>B1IZC1</accession>
<proteinExistence type="inferred from homology"/>
<keyword id="KW-0067">ATP-binding</keyword>
<keyword id="KW-0143">Chaperone</keyword>
<keyword id="KW-0963">Cytoplasm</keyword>
<keyword id="KW-0547">Nucleotide-binding</keyword>
<keyword id="KW-0346">Stress response</keyword>
<evidence type="ECO:0000255" key="1">
    <source>
        <dbReference type="HAMAP-Rule" id="MF_00505"/>
    </source>
</evidence>
<gene>
    <name evidence="1" type="primary">htpG</name>
    <name type="ordered locus">EcolC_3143</name>
</gene>
<feature type="chain" id="PRO_1000081515" description="Chaperone protein HtpG">
    <location>
        <begin position="1"/>
        <end position="624"/>
    </location>
</feature>
<feature type="region of interest" description="A; substrate-binding" evidence="1">
    <location>
        <begin position="1"/>
        <end position="336"/>
    </location>
</feature>
<feature type="region of interest" description="B" evidence="1">
    <location>
        <begin position="337"/>
        <end position="552"/>
    </location>
</feature>
<feature type="region of interest" description="C" evidence="1">
    <location>
        <begin position="553"/>
        <end position="624"/>
    </location>
</feature>